<sequence length="247" mass="27095">MRQSEWLDTVLGLLPGCPKGLPGFWVENEAQASGQALELVLGWHDDCLGLWRPGGKQTPLTVSFCDGKQGYRLTPERVRHERLIKALGKPKDDRIRVLDATAGLGRDAALMAQAGFQVMLAERSPILHAMLADGLQRAPASLVANMQLLACADSKIAEPSALHAVYLDPMFPAREKSAAVKKDLQWLQRLCPYPDEVEEQQLLDWARALGASRVVVKRPVKAGFLAGVTPSFSQKGKAVRFDIYTCP</sequence>
<proteinExistence type="inferred from homology"/>
<protein>
    <recommendedName>
        <fullName evidence="1">Ribosomal RNA small subunit methyltransferase J</fullName>
        <ecNumber evidence="1">2.1.1.242</ecNumber>
    </recommendedName>
    <alternativeName>
        <fullName evidence="1">16S rRNA m2G1516 methyltransferase</fullName>
    </alternativeName>
    <alternativeName>
        <fullName evidence="1">rRNA (guanine-N(2)-)-methyltransferase</fullName>
    </alternativeName>
</protein>
<gene>
    <name evidence="1" type="primary">rsmJ</name>
    <name type="ordered locus">ABO_1131</name>
</gene>
<accession>Q0VQG9</accession>
<dbReference type="EC" id="2.1.1.242" evidence="1"/>
<dbReference type="EMBL" id="AM286690">
    <property type="protein sequence ID" value="CAL16579.1"/>
    <property type="molecule type" value="Genomic_DNA"/>
</dbReference>
<dbReference type="SMR" id="Q0VQG9"/>
<dbReference type="STRING" id="393595.ABO_1131"/>
<dbReference type="KEGG" id="abo:ABO_1131"/>
<dbReference type="eggNOG" id="COG0742">
    <property type="taxonomic scope" value="Bacteria"/>
</dbReference>
<dbReference type="HOGENOM" id="CLU_076324_1_0_6"/>
<dbReference type="OrthoDB" id="3191794at2"/>
<dbReference type="Proteomes" id="UP000008871">
    <property type="component" value="Chromosome"/>
</dbReference>
<dbReference type="GO" id="GO:0005737">
    <property type="term" value="C:cytoplasm"/>
    <property type="evidence" value="ECO:0007669"/>
    <property type="project" value="UniProtKB-SubCell"/>
</dbReference>
<dbReference type="GO" id="GO:0008990">
    <property type="term" value="F:rRNA (guanine-N2-)-methyltransferase activity"/>
    <property type="evidence" value="ECO:0007669"/>
    <property type="project" value="UniProtKB-UniRule"/>
</dbReference>
<dbReference type="Gene3D" id="3.40.50.150">
    <property type="entry name" value="Vaccinia Virus protein VP39"/>
    <property type="match status" value="1"/>
</dbReference>
<dbReference type="HAMAP" id="MF_01523">
    <property type="entry name" value="16SrRNA_methyltr_J"/>
    <property type="match status" value="1"/>
</dbReference>
<dbReference type="InterPro" id="IPR007536">
    <property type="entry name" value="16SrRNA_methylTrfase_J"/>
</dbReference>
<dbReference type="InterPro" id="IPR029063">
    <property type="entry name" value="SAM-dependent_MTases_sf"/>
</dbReference>
<dbReference type="PANTHER" id="PTHR36112">
    <property type="entry name" value="RIBOSOMAL RNA SMALL SUBUNIT METHYLTRANSFERASE J"/>
    <property type="match status" value="1"/>
</dbReference>
<dbReference type="PANTHER" id="PTHR36112:SF1">
    <property type="entry name" value="RIBOSOMAL RNA SMALL SUBUNIT METHYLTRANSFERASE J"/>
    <property type="match status" value="1"/>
</dbReference>
<dbReference type="Pfam" id="PF04445">
    <property type="entry name" value="SAM_MT"/>
    <property type="match status" value="1"/>
</dbReference>
<dbReference type="SUPFAM" id="SSF53335">
    <property type="entry name" value="S-adenosyl-L-methionine-dependent methyltransferases"/>
    <property type="match status" value="1"/>
</dbReference>
<keyword id="KW-0963">Cytoplasm</keyword>
<keyword id="KW-0489">Methyltransferase</keyword>
<keyword id="KW-1185">Reference proteome</keyword>
<keyword id="KW-0698">rRNA processing</keyword>
<keyword id="KW-0949">S-adenosyl-L-methionine</keyword>
<keyword id="KW-0808">Transferase</keyword>
<organism>
    <name type="scientific">Alcanivorax borkumensis (strain ATCC 700651 / DSM 11573 / NCIMB 13689 / SK2)</name>
    <dbReference type="NCBI Taxonomy" id="393595"/>
    <lineage>
        <taxon>Bacteria</taxon>
        <taxon>Pseudomonadati</taxon>
        <taxon>Pseudomonadota</taxon>
        <taxon>Gammaproteobacteria</taxon>
        <taxon>Oceanospirillales</taxon>
        <taxon>Alcanivoracaceae</taxon>
        <taxon>Alcanivorax</taxon>
    </lineage>
</organism>
<reference key="1">
    <citation type="journal article" date="2006" name="Nat. Biotechnol.">
        <title>Genome sequence of the ubiquitous hydrocarbon-degrading marine bacterium Alcanivorax borkumensis.</title>
        <authorList>
            <person name="Schneiker S."/>
            <person name="Martins dos Santos V.A.P."/>
            <person name="Bartels D."/>
            <person name="Bekel T."/>
            <person name="Brecht M."/>
            <person name="Buhrmester J."/>
            <person name="Chernikova T.N."/>
            <person name="Denaro R."/>
            <person name="Ferrer M."/>
            <person name="Gertler C."/>
            <person name="Goesmann A."/>
            <person name="Golyshina O.V."/>
            <person name="Kaminski F."/>
            <person name="Khachane A.N."/>
            <person name="Lang S."/>
            <person name="Linke B."/>
            <person name="McHardy A.C."/>
            <person name="Meyer F."/>
            <person name="Nechitaylo T."/>
            <person name="Puehler A."/>
            <person name="Regenhardt D."/>
            <person name="Rupp O."/>
            <person name="Sabirova J.S."/>
            <person name="Selbitschka W."/>
            <person name="Yakimov M.M."/>
            <person name="Timmis K.N."/>
            <person name="Vorhoelter F.-J."/>
            <person name="Weidner S."/>
            <person name="Kaiser O."/>
            <person name="Golyshin P.N."/>
        </authorList>
    </citation>
    <scope>NUCLEOTIDE SEQUENCE [LARGE SCALE GENOMIC DNA]</scope>
    <source>
        <strain>ATCC 700651 / DSM 11573 / NCIMB 13689 / SK2</strain>
    </source>
</reference>
<evidence type="ECO:0000255" key="1">
    <source>
        <dbReference type="HAMAP-Rule" id="MF_01523"/>
    </source>
</evidence>
<feature type="chain" id="PRO_0000296964" description="Ribosomal RNA small subunit methyltransferase J">
    <location>
        <begin position="1"/>
        <end position="247"/>
    </location>
</feature>
<feature type="binding site" evidence="1">
    <location>
        <begin position="106"/>
        <end position="107"/>
    </location>
    <ligand>
        <name>S-adenosyl-L-methionine</name>
        <dbReference type="ChEBI" id="CHEBI:59789"/>
    </ligand>
</feature>
<feature type="binding site" evidence="1">
    <location>
        <begin position="122"/>
        <end position="123"/>
    </location>
    <ligand>
        <name>S-adenosyl-L-methionine</name>
        <dbReference type="ChEBI" id="CHEBI:59789"/>
    </ligand>
</feature>
<feature type="binding site" evidence="1">
    <location>
        <position position="168"/>
    </location>
    <ligand>
        <name>S-adenosyl-L-methionine</name>
        <dbReference type="ChEBI" id="CHEBI:59789"/>
    </ligand>
</feature>
<name>RSMJ_ALCBS</name>
<comment type="function">
    <text evidence="1">Specifically methylates the guanosine in position 1516 of 16S rRNA.</text>
</comment>
<comment type="catalytic activity">
    <reaction evidence="1">
        <text>guanosine(1516) in 16S rRNA + S-adenosyl-L-methionine = N(2)-methylguanosine(1516) in 16S rRNA + S-adenosyl-L-homocysteine + H(+)</text>
        <dbReference type="Rhea" id="RHEA:43220"/>
        <dbReference type="Rhea" id="RHEA-COMP:10412"/>
        <dbReference type="Rhea" id="RHEA-COMP:10413"/>
        <dbReference type="ChEBI" id="CHEBI:15378"/>
        <dbReference type="ChEBI" id="CHEBI:57856"/>
        <dbReference type="ChEBI" id="CHEBI:59789"/>
        <dbReference type="ChEBI" id="CHEBI:74269"/>
        <dbReference type="ChEBI" id="CHEBI:74481"/>
        <dbReference type="EC" id="2.1.1.242"/>
    </reaction>
</comment>
<comment type="subcellular location">
    <subcellularLocation>
        <location evidence="1">Cytoplasm</location>
    </subcellularLocation>
</comment>
<comment type="similarity">
    <text evidence="1">Belongs to the methyltransferase superfamily. RsmJ family.</text>
</comment>